<organism>
    <name type="scientific">Mycobacterium bovis (strain ATCC BAA-935 / AF2122/97)</name>
    <dbReference type="NCBI Taxonomy" id="233413"/>
    <lineage>
        <taxon>Bacteria</taxon>
        <taxon>Bacillati</taxon>
        <taxon>Actinomycetota</taxon>
        <taxon>Actinomycetes</taxon>
        <taxon>Mycobacteriales</taxon>
        <taxon>Mycobacteriaceae</taxon>
        <taxon>Mycobacterium</taxon>
        <taxon>Mycobacterium tuberculosis complex</taxon>
    </lineage>
</organism>
<gene>
    <name type="ordered locus">BQ2027_MB2924C</name>
</gene>
<evidence type="ECO:0000250" key="1"/>
<evidence type="ECO:0000305" key="2"/>
<reference key="1">
    <citation type="journal article" date="2003" name="Proc. Natl. Acad. Sci. U.S.A.">
        <title>The complete genome sequence of Mycobacterium bovis.</title>
        <authorList>
            <person name="Garnier T."/>
            <person name="Eiglmeier K."/>
            <person name="Camus J.-C."/>
            <person name="Medina N."/>
            <person name="Mansoor H."/>
            <person name="Pryor M."/>
            <person name="Duthoy S."/>
            <person name="Grondin S."/>
            <person name="Lacroix C."/>
            <person name="Monsempe C."/>
            <person name="Simon S."/>
            <person name="Harris B."/>
            <person name="Atkin R."/>
            <person name="Doggett J."/>
            <person name="Mayes R."/>
            <person name="Keating L."/>
            <person name="Wheeler P.R."/>
            <person name="Parkhill J."/>
            <person name="Barrell B.G."/>
            <person name="Cole S.T."/>
            <person name="Gordon S.V."/>
            <person name="Hewinson R.G."/>
        </authorList>
    </citation>
    <scope>NUCLEOTIDE SEQUENCE [LARGE SCALE GENOMIC DNA]</scope>
    <source>
        <strain>ATCC BAA-935 / AF2122/97</strain>
    </source>
</reference>
<reference key="2">
    <citation type="journal article" date="2017" name="Genome Announc.">
        <title>Updated reference genome sequence and annotation of Mycobacterium bovis AF2122/97.</title>
        <authorList>
            <person name="Malone K.M."/>
            <person name="Farrell D."/>
            <person name="Stuber T.P."/>
            <person name="Schubert O.T."/>
            <person name="Aebersold R."/>
            <person name="Robbe-Austerman S."/>
            <person name="Gordon S.V."/>
        </authorList>
    </citation>
    <scope>NUCLEOTIDE SEQUENCE [LARGE SCALE GENOMIC DNA]</scope>
    <scope>GENOME REANNOTATION</scope>
    <source>
        <strain>ATCC BAA-935 / AF2122/97</strain>
    </source>
</reference>
<protein>
    <recommendedName>
        <fullName>Uncharacterized oxidoreductase Mb2924c</fullName>
        <ecNumber>1.-.-.-</ecNumber>
    </recommendedName>
</protein>
<comment type="cofactor">
    <cofactor evidence="2">
        <name>[4Fe-4S] cluster</name>
        <dbReference type="ChEBI" id="CHEBI:49883"/>
    </cofactor>
    <text evidence="2">Binds 1 [4Fe-4S] cluster.</text>
</comment>
<comment type="cofactor">
    <cofactor evidence="1">
        <name>Mo-bis(molybdopterin guanine dinucleotide)</name>
        <dbReference type="ChEBI" id="CHEBI:60539"/>
    </cofactor>
    <text evidence="1">Binds 1 molybdenum-bis(molybdopterin guanine dinucleotide) (Mo-bis-MGD) cofactor per subunit.</text>
</comment>
<comment type="similarity">
    <text evidence="2">Belongs to the prokaryotic molybdopterin-containing oxidoreductase family.</text>
</comment>
<dbReference type="EC" id="1.-.-.-"/>
<dbReference type="EMBL" id="LT708304">
    <property type="protein sequence ID" value="SIU01545.1"/>
    <property type="molecule type" value="Genomic_DNA"/>
</dbReference>
<dbReference type="RefSeq" id="NP_856569.1">
    <property type="nucleotide sequence ID" value="NC_002945.3"/>
</dbReference>
<dbReference type="RefSeq" id="WP_003899532.1">
    <property type="nucleotide sequence ID" value="NC_002945.4"/>
</dbReference>
<dbReference type="SMR" id="P65409"/>
<dbReference type="KEGG" id="mbo:BQ2027_MB2924C"/>
<dbReference type="PATRIC" id="fig|233413.5.peg.3210"/>
<dbReference type="Proteomes" id="UP000001419">
    <property type="component" value="Chromosome"/>
</dbReference>
<dbReference type="GO" id="GO:0016020">
    <property type="term" value="C:membrane"/>
    <property type="evidence" value="ECO:0007669"/>
    <property type="project" value="TreeGrafter"/>
</dbReference>
<dbReference type="GO" id="GO:0051539">
    <property type="term" value="F:4 iron, 4 sulfur cluster binding"/>
    <property type="evidence" value="ECO:0007669"/>
    <property type="project" value="UniProtKB-KW"/>
</dbReference>
<dbReference type="GO" id="GO:0008863">
    <property type="term" value="F:formate dehydrogenase (NAD+) activity"/>
    <property type="evidence" value="ECO:0007669"/>
    <property type="project" value="InterPro"/>
</dbReference>
<dbReference type="GO" id="GO:0030151">
    <property type="term" value="F:molybdenum ion binding"/>
    <property type="evidence" value="ECO:0007669"/>
    <property type="project" value="InterPro"/>
</dbReference>
<dbReference type="GO" id="GO:0043546">
    <property type="term" value="F:molybdopterin cofactor binding"/>
    <property type="evidence" value="ECO:0007669"/>
    <property type="project" value="InterPro"/>
</dbReference>
<dbReference type="CDD" id="cd02787">
    <property type="entry name" value="MopB_CT_ydeP"/>
    <property type="match status" value="1"/>
</dbReference>
<dbReference type="CDD" id="cd02767">
    <property type="entry name" value="MopB_ydeP"/>
    <property type="match status" value="1"/>
</dbReference>
<dbReference type="FunFam" id="3.40.228.10:FF:000002">
    <property type="entry name" value="Formate dehydrogenase subunit alpha"/>
    <property type="match status" value="1"/>
</dbReference>
<dbReference type="Gene3D" id="3.40.50.740">
    <property type="match status" value="1"/>
</dbReference>
<dbReference type="Gene3D" id="3.40.228.10">
    <property type="entry name" value="Dimethylsulfoxide Reductase, domain 2"/>
    <property type="match status" value="1"/>
</dbReference>
<dbReference type="InterPro" id="IPR009010">
    <property type="entry name" value="Asp_de-COase-like_dom_sf"/>
</dbReference>
<dbReference type="InterPro" id="IPR037951">
    <property type="entry name" value="MopB_CT_YdeP"/>
</dbReference>
<dbReference type="InterPro" id="IPR006657">
    <property type="entry name" value="MoPterin_dinucl-bd_dom"/>
</dbReference>
<dbReference type="InterPro" id="IPR006656">
    <property type="entry name" value="Mopterin_OxRdtase"/>
</dbReference>
<dbReference type="InterPro" id="IPR010046">
    <property type="entry name" value="Mopterin_OxRdtse_a_bac"/>
</dbReference>
<dbReference type="InterPro" id="IPR050123">
    <property type="entry name" value="Prok_molybdopt-oxidoreductase"/>
</dbReference>
<dbReference type="InterPro" id="IPR041953">
    <property type="entry name" value="YdeP_MopB"/>
</dbReference>
<dbReference type="NCBIfam" id="TIGR01701">
    <property type="entry name" value="Fdhalpha-like"/>
    <property type="match status" value="1"/>
</dbReference>
<dbReference type="PANTHER" id="PTHR43105:SF4">
    <property type="entry name" value="PROTEIN YDEP"/>
    <property type="match status" value="1"/>
</dbReference>
<dbReference type="PANTHER" id="PTHR43105">
    <property type="entry name" value="RESPIRATORY NITRATE REDUCTASE"/>
    <property type="match status" value="1"/>
</dbReference>
<dbReference type="Pfam" id="PF00384">
    <property type="entry name" value="Molybdopterin"/>
    <property type="match status" value="1"/>
</dbReference>
<dbReference type="Pfam" id="PF01568">
    <property type="entry name" value="Molydop_binding"/>
    <property type="match status" value="1"/>
</dbReference>
<dbReference type="PIRSF" id="PIRSF000144">
    <property type="entry name" value="CbbBc"/>
    <property type="match status" value="1"/>
</dbReference>
<dbReference type="SUPFAM" id="SSF50692">
    <property type="entry name" value="ADC-like"/>
    <property type="match status" value="1"/>
</dbReference>
<dbReference type="SUPFAM" id="SSF53706">
    <property type="entry name" value="Formate dehydrogenase/DMSO reductase, domains 1-3"/>
    <property type="match status" value="1"/>
</dbReference>
<name>Y2924_MYCBO</name>
<accession>P65409</accession>
<accession>A0A1R3Y4I5</accession>
<accession>Q10821</accession>
<accession>X2BMQ9</accession>
<proteinExistence type="inferred from homology"/>
<keyword id="KW-0004">4Fe-4S</keyword>
<keyword id="KW-0408">Iron</keyword>
<keyword id="KW-0411">Iron-sulfur</keyword>
<keyword id="KW-0479">Metal-binding</keyword>
<keyword id="KW-0500">Molybdenum</keyword>
<keyword id="KW-0560">Oxidoreductase</keyword>
<keyword id="KW-1185">Reference proteome</keyword>
<feature type="chain" id="PRO_0000063244" description="Uncharacterized oxidoreductase Mb2924c">
    <location>
        <begin position="1"/>
        <end position="779"/>
    </location>
</feature>
<feature type="binding site" evidence="1">
    <location>
        <position position="72"/>
    </location>
    <ligand>
        <name>[4Fe-4S] cluster</name>
        <dbReference type="ChEBI" id="CHEBI:49883"/>
    </ligand>
</feature>
<feature type="binding site" evidence="1">
    <location>
        <position position="75"/>
    </location>
    <ligand>
        <name>[4Fe-4S] cluster</name>
        <dbReference type="ChEBI" id="CHEBI:49883"/>
    </ligand>
</feature>
<sequence length="779" mass="84566">MYVEAVRWQRSAASRDVLADYDEQAVTVAPRKREAAGVRAVMVSLQRGMQQMGALRTAAALARLNQRNGFDCPGCAWPEEPGGRKLAEFCENGAKAVAEEATKRTVTAEFFARHSVAELSAKPEYWLSQQGRLAHPMVLRPGDDHYRPISWDAAYQLIAEQLNGLDSPDRAVFYTSGRTSNEAAFCYQLLVRSFGTNNLPDCSNMCHESSGAALTDSIGIGKGSVTIGDVEHADLIVIAGQNPGTNHPRMLSVLGKAKANGAKIIAVNPLPEAGLIRFKDPQKVNGVVGHGIPIADEFVQIRLGGDMALFAGLGRLLLEAEERVPGSVVDRSFVDNHCAGFDGYRRRTLQVGLDTVMDATGIELAQLQRVAAMLMASQRTVICWAMGLTQHAHAVATIGEVTNVLLLRGMIGKPGAGVCPVRGHSNVQGDRTMGIWEKMPEQFLAALDREFGITSPRAHGFDTVAAIRAMRDGRVSVFMGMGGNFASATPDTAVTEAALRRCALTVQVSTKLNRSHLVHGATALILPTLGRTDRDTRNGRKQLVSVEDSMSMVHLSRGSLHPPSDQVRSEVQIICQLARALFGPGHPVPWERFADDYDTIRDAIAAVVPGCDDYNHKVRVPDGFQLPHPPRDAREFRTSTGKANFAVNPLQWVPVPPGRLVLQTLRSHDQYNTTIYGLDDRYRGVKGGRRVVFINPADIETFGLTAGDRVDLVSEWTDGQGGLQERRAKDFLVVAYSTPVGNAAAYYPETNPLVPLDHTAAQSNTPVSKAIIVRLEPTA</sequence>